<reference key="1">
    <citation type="journal article" date="2008" name="Genome Res.">
        <title>Chlamydia trachomatis: genome sequence analysis of lymphogranuloma venereum isolates.</title>
        <authorList>
            <person name="Thomson N.R."/>
            <person name="Holden M.T.G."/>
            <person name="Carder C."/>
            <person name="Lennard N."/>
            <person name="Lockey S.J."/>
            <person name="Marsh P."/>
            <person name="Skipp P."/>
            <person name="O'Connor C.D."/>
            <person name="Goodhead I."/>
            <person name="Norbertzcak H."/>
            <person name="Harris B."/>
            <person name="Ormond D."/>
            <person name="Rance R."/>
            <person name="Quail M.A."/>
            <person name="Parkhill J."/>
            <person name="Stephens R.S."/>
            <person name="Clarke I.N."/>
        </authorList>
    </citation>
    <scope>NUCLEOTIDE SEQUENCE [LARGE SCALE GENOMIC DNA]</scope>
    <source>
        <strain>UCH-1/proctitis</strain>
    </source>
</reference>
<gene>
    <name evidence="1" type="primary">rpiA</name>
    <name type="ordered locus">CTLon_0460</name>
</gene>
<proteinExistence type="inferred from homology"/>
<comment type="function">
    <text evidence="1">Catalyzes the reversible conversion of ribose-5-phosphate to ribulose 5-phosphate.</text>
</comment>
<comment type="catalytic activity">
    <reaction evidence="1">
        <text>aldehydo-D-ribose 5-phosphate = D-ribulose 5-phosphate</text>
        <dbReference type="Rhea" id="RHEA:14657"/>
        <dbReference type="ChEBI" id="CHEBI:58121"/>
        <dbReference type="ChEBI" id="CHEBI:58273"/>
        <dbReference type="EC" id="5.3.1.6"/>
    </reaction>
</comment>
<comment type="pathway">
    <text evidence="1">Carbohydrate degradation; pentose phosphate pathway; D-ribose 5-phosphate from D-ribulose 5-phosphate (non-oxidative stage): step 1/1.</text>
</comment>
<comment type="subunit">
    <text evidence="1">Homodimer.</text>
</comment>
<comment type="similarity">
    <text evidence="1">Belongs to the ribose 5-phosphate isomerase family.</text>
</comment>
<protein>
    <recommendedName>
        <fullName evidence="1">Ribose-5-phosphate isomerase A</fullName>
        <ecNumber evidence="1">5.3.1.6</ecNumber>
    </recommendedName>
    <alternativeName>
        <fullName evidence="1">Phosphoriboisomerase A</fullName>
        <shortName evidence="1">PRI</shortName>
    </alternativeName>
</protein>
<accession>B0BBJ3</accession>
<keyword id="KW-0413">Isomerase</keyword>
<evidence type="ECO:0000255" key="1">
    <source>
        <dbReference type="HAMAP-Rule" id="MF_00170"/>
    </source>
</evidence>
<name>RPIA_CHLTB</name>
<sequence>MSKQPENSFSSDKFFPIKQKLALEAVALVEPGMCVGLGSGSTAREFILALGDRVRTERLVITAVASSRISQLLAEAVGIPLLDHSLLQDVDLVVDGADEVDPCLRMIKGGGGALFREKILLQSGKRNVILVDERKLVPTLGKFSLPIEIAPFGCSSVQRILNKQGYFGEWRETSAGERFITDNGNYIYDVRTPDSYANPEEDMIRLLQIRGIIDVGFVIAKAEVWVGYADGSIVRKKEHNEY</sequence>
<dbReference type="EC" id="5.3.1.6" evidence="1"/>
<dbReference type="EMBL" id="AM884177">
    <property type="protein sequence ID" value="CAP06858.1"/>
    <property type="molecule type" value="Genomic_DNA"/>
</dbReference>
<dbReference type="RefSeq" id="WP_009871559.1">
    <property type="nucleotide sequence ID" value="NC_010280.2"/>
</dbReference>
<dbReference type="SMR" id="B0BBJ3"/>
<dbReference type="KEGG" id="ctl:CTLon_0460"/>
<dbReference type="HOGENOM" id="CLU_056590_1_0_0"/>
<dbReference type="UniPathway" id="UPA00115">
    <property type="reaction ID" value="UER00412"/>
</dbReference>
<dbReference type="Proteomes" id="UP001154401">
    <property type="component" value="Chromosome"/>
</dbReference>
<dbReference type="GO" id="GO:0004751">
    <property type="term" value="F:ribose-5-phosphate isomerase activity"/>
    <property type="evidence" value="ECO:0007669"/>
    <property type="project" value="UniProtKB-UniRule"/>
</dbReference>
<dbReference type="GO" id="GO:0009052">
    <property type="term" value="P:pentose-phosphate shunt, non-oxidative branch"/>
    <property type="evidence" value="ECO:0007669"/>
    <property type="project" value="UniProtKB-UniRule"/>
</dbReference>
<dbReference type="CDD" id="cd01398">
    <property type="entry name" value="RPI_A"/>
    <property type="match status" value="1"/>
</dbReference>
<dbReference type="FunFam" id="3.40.50.1360:FF:000001">
    <property type="entry name" value="Ribose-5-phosphate isomerase A"/>
    <property type="match status" value="1"/>
</dbReference>
<dbReference type="Gene3D" id="3.30.70.260">
    <property type="match status" value="1"/>
</dbReference>
<dbReference type="Gene3D" id="3.40.50.1360">
    <property type="match status" value="1"/>
</dbReference>
<dbReference type="HAMAP" id="MF_00170">
    <property type="entry name" value="Rib_5P_isom_A"/>
    <property type="match status" value="1"/>
</dbReference>
<dbReference type="InterPro" id="IPR037171">
    <property type="entry name" value="NagB/RpiA_transferase-like"/>
</dbReference>
<dbReference type="InterPro" id="IPR050262">
    <property type="entry name" value="Ribose-5P_isomerase"/>
</dbReference>
<dbReference type="InterPro" id="IPR020672">
    <property type="entry name" value="Ribose5P_isomerase_typA_subgr"/>
</dbReference>
<dbReference type="InterPro" id="IPR004788">
    <property type="entry name" value="Ribose5P_isomerase_type_A"/>
</dbReference>
<dbReference type="NCBIfam" id="NF001924">
    <property type="entry name" value="PRK00702.1"/>
    <property type="match status" value="1"/>
</dbReference>
<dbReference type="NCBIfam" id="TIGR00021">
    <property type="entry name" value="rpiA"/>
    <property type="match status" value="1"/>
</dbReference>
<dbReference type="PANTHER" id="PTHR43748">
    <property type="entry name" value="RIBOSE-5-PHOSPHATE ISOMERASE 3, CHLOROPLASTIC-RELATED"/>
    <property type="match status" value="1"/>
</dbReference>
<dbReference type="PANTHER" id="PTHR43748:SF3">
    <property type="entry name" value="RIBOSE-5-PHOSPHATE ISOMERASE 3, CHLOROPLASTIC-RELATED"/>
    <property type="match status" value="1"/>
</dbReference>
<dbReference type="Pfam" id="PF06026">
    <property type="entry name" value="Rib_5-P_isom_A"/>
    <property type="match status" value="1"/>
</dbReference>
<dbReference type="SUPFAM" id="SSF75445">
    <property type="entry name" value="D-ribose-5-phosphate isomerase (RpiA), lid domain"/>
    <property type="match status" value="1"/>
</dbReference>
<dbReference type="SUPFAM" id="SSF100950">
    <property type="entry name" value="NagB/RpiA/CoA transferase-like"/>
    <property type="match status" value="1"/>
</dbReference>
<feature type="chain" id="PRO_1000097656" description="Ribose-5-phosphate isomerase A">
    <location>
        <begin position="1"/>
        <end position="242"/>
    </location>
</feature>
<feature type="active site" description="Proton acceptor" evidence="1">
    <location>
        <position position="117"/>
    </location>
</feature>
<feature type="binding site" evidence="1">
    <location>
        <begin position="39"/>
        <end position="42"/>
    </location>
    <ligand>
        <name>substrate</name>
    </ligand>
</feature>
<feature type="binding site" evidence="1">
    <location>
        <begin position="95"/>
        <end position="98"/>
    </location>
    <ligand>
        <name>substrate</name>
    </ligand>
</feature>
<feature type="binding site" evidence="1">
    <location>
        <begin position="108"/>
        <end position="111"/>
    </location>
    <ligand>
        <name>substrate</name>
    </ligand>
</feature>
<feature type="binding site" evidence="1">
    <location>
        <position position="135"/>
    </location>
    <ligand>
        <name>substrate</name>
    </ligand>
</feature>
<organism>
    <name type="scientific">Chlamydia trachomatis serovar L2b (strain UCH-1/proctitis)</name>
    <dbReference type="NCBI Taxonomy" id="471473"/>
    <lineage>
        <taxon>Bacteria</taxon>
        <taxon>Pseudomonadati</taxon>
        <taxon>Chlamydiota</taxon>
        <taxon>Chlamydiia</taxon>
        <taxon>Chlamydiales</taxon>
        <taxon>Chlamydiaceae</taxon>
        <taxon>Chlamydia/Chlamydophila group</taxon>
        <taxon>Chlamydia</taxon>
    </lineage>
</organism>